<feature type="chain" id="PRO_1000085346" description="Chaperone modulatory protein CbpM">
    <location>
        <begin position="1"/>
        <end position="101"/>
    </location>
</feature>
<evidence type="ECO:0000255" key="1">
    <source>
        <dbReference type="HAMAP-Rule" id="MF_01155"/>
    </source>
</evidence>
<name>CBPM_PSEPG</name>
<protein>
    <recommendedName>
        <fullName evidence="1">Chaperone modulatory protein CbpM</fullName>
    </recommendedName>
</protein>
<proteinExistence type="inferred from homology"/>
<organism>
    <name type="scientific">Pseudomonas putida (strain GB-1)</name>
    <dbReference type="NCBI Taxonomy" id="76869"/>
    <lineage>
        <taxon>Bacteria</taxon>
        <taxon>Pseudomonadati</taxon>
        <taxon>Pseudomonadota</taxon>
        <taxon>Gammaproteobacteria</taxon>
        <taxon>Pseudomonadales</taxon>
        <taxon>Pseudomonadaceae</taxon>
        <taxon>Pseudomonas</taxon>
    </lineage>
</organism>
<comment type="function">
    <text evidence="1">Interacts with CbpA and inhibits both the DnaJ-like co-chaperone activity and the DNA binding activity of CbpA. Together with CbpA, modulates the activity of the DnaK chaperone system. Does not inhibit the co-chaperone activity of DnaJ.</text>
</comment>
<comment type="similarity">
    <text evidence="1">Belongs to the CbpM family.</text>
</comment>
<sequence length="101" mass="11591">MSSTLIVQLDMRTLCQEADVTADCVIEIVEHGIVEPSGRTPEDWLFDDQAPLLTRRAAKLHQELELEWEGVALALELLQEVQQLRSENSMLRQRLGRFTQM</sequence>
<gene>
    <name evidence="1" type="primary">cbpM</name>
    <name type="ordered locus">PputGB1_4904</name>
</gene>
<dbReference type="EMBL" id="CP000926">
    <property type="protein sequence ID" value="ABZ00789.1"/>
    <property type="molecule type" value="Genomic_DNA"/>
</dbReference>
<dbReference type="RefSeq" id="WP_012274420.1">
    <property type="nucleotide sequence ID" value="NC_010322.1"/>
</dbReference>
<dbReference type="SMR" id="B0KK25"/>
<dbReference type="KEGG" id="ppg:PputGB1_4904"/>
<dbReference type="eggNOG" id="COG0789">
    <property type="taxonomic scope" value="Bacteria"/>
</dbReference>
<dbReference type="HOGENOM" id="CLU_144710_3_1_6"/>
<dbReference type="Proteomes" id="UP000002157">
    <property type="component" value="Chromosome"/>
</dbReference>
<dbReference type="Gene3D" id="1.10.1660.10">
    <property type="match status" value="1"/>
</dbReference>
<dbReference type="HAMAP" id="MF_01155">
    <property type="entry name" value="CbpM"/>
    <property type="match status" value="1"/>
</dbReference>
<dbReference type="InterPro" id="IPR022835">
    <property type="entry name" value="CbpM"/>
</dbReference>
<dbReference type="Pfam" id="PF13591">
    <property type="entry name" value="MerR_2"/>
    <property type="match status" value="1"/>
</dbReference>
<reference key="1">
    <citation type="submission" date="2008-01" db="EMBL/GenBank/DDBJ databases">
        <title>Complete sequence of Pseudomonas putida GB-1.</title>
        <authorList>
            <consortium name="US DOE Joint Genome Institute"/>
            <person name="Copeland A."/>
            <person name="Lucas S."/>
            <person name="Lapidus A."/>
            <person name="Barry K."/>
            <person name="Glavina del Rio T."/>
            <person name="Dalin E."/>
            <person name="Tice H."/>
            <person name="Pitluck S."/>
            <person name="Bruce D."/>
            <person name="Goodwin L."/>
            <person name="Chertkov O."/>
            <person name="Brettin T."/>
            <person name="Detter J.C."/>
            <person name="Han C."/>
            <person name="Kuske C.R."/>
            <person name="Schmutz J."/>
            <person name="Larimer F."/>
            <person name="Land M."/>
            <person name="Hauser L."/>
            <person name="Kyrpides N."/>
            <person name="Kim E."/>
            <person name="McCarthy J.K."/>
            <person name="Richardson P."/>
        </authorList>
    </citation>
    <scope>NUCLEOTIDE SEQUENCE [LARGE SCALE GENOMIC DNA]</scope>
    <source>
        <strain>GB-1</strain>
    </source>
</reference>
<accession>B0KK25</accession>